<organism>
    <name type="scientific">Coccidioides posadasii (strain RMSCC 757 / Silveira)</name>
    <name type="common">Valley fever fungus</name>
    <dbReference type="NCBI Taxonomy" id="443226"/>
    <lineage>
        <taxon>Eukaryota</taxon>
        <taxon>Fungi</taxon>
        <taxon>Dikarya</taxon>
        <taxon>Ascomycota</taxon>
        <taxon>Pezizomycotina</taxon>
        <taxon>Eurotiomycetes</taxon>
        <taxon>Eurotiomycetidae</taxon>
        <taxon>Onygenales</taxon>
        <taxon>Onygenaceae</taxon>
        <taxon>Coccidioides</taxon>
    </lineage>
</organism>
<comment type="function">
    <text evidence="6 7">Alpha-mannosidase involved in the maturation of Asn-linked oligosaccharides. Progressively trims alpha-1,2-linked mannose residues from Man(9)GlcNAc(2) to produce Man(5)GlcNAc(2).</text>
</comment>
<comment type="catalytic activity">
    <reaction evidence="7">
        <text>N(4)-(alpha-D-Man-(1-&gt;2)-alpha-D-Man-(1-&gt;2)-alpha-D-Man-(1-&gt;3)-[alpha-D-Man-(1-&gt;2)-alpha-D-Man-(1-&gt;3)-[alpha-D-Man-(1-&gt;2)-alpha-D-Man-(1-&gt;6)]-alpha-D-Man-(1-&gt;6)]-beta-D-Man-(1-&gt;4)-beta-D-GlcNAc-(1-&gt;4)-beta-D-GlcNAc)-L-asparaginyl-[protein] (N-glucan mannose isomer 9A1,2,3B1,2,3) + 4 H2O = N(4)-(alpha-D-Man-(1-&gt;3)-[alpha-D-Man-(1-&gt;3)-[alpha-D-Man-(1-&gt;6)]-alpha-D-Man-(1-&gt;6)]-beta-D-Man-(1-&gt;4)-beta-D-GlcNAc-(1-&gt;4)-beta-D-GlcNAc)-L-asparaginyl-[protein] (N-glucan mannose isomer 5A1,2) + 4 beta-D-mannose</text>
        <dbReference type="Rhea" id="RHEA:56008"/>
        <dbReference type="Rhea" id="RHEA-COMP:14356"/>
        <dbReference type="Rhea" id="RHEA-COMP:14367"/>
        <dbReference type="ChEBI" id="CHEBI:15377"/>
        <dbReference type="ChEBI" id="CHEBI:28563"/>
        <dbReference type="ChEBI" id="CHEBI:59087"/>
        <dbReference type="ChEBI" id="CHEBI:139493"/>
        <dbReference type="EC" id="3.2.1.113"/>
    </reaction>
</comment>
<comment type="catalytic activity">
    <reaction evidence="7">
        <text>N(4)-(alpha-D-Man-(1-&gt;2)-alpha-D-Man-(1-&gt;2)-alpha-D-Man-(1-&gt;3)-[alpha-D-Man-(1-&gt;3)-[alpha-D-Man-(1-&gt;2)-alpha-D-Man-(1-&gt;6)]-alpha-D-Man-(1-&gt;6)]-beta-D-Man-(1-&gt;4)-beta-D-GlcNAc-(1-&gt;4)-beta-D-GlcNAc)-L-asparaginyl-[protein] (N-glucan mannose isomer 8A1,2,3B1,3) + 3 H2O = N(4)-(alpha-D-Man-(1-&gt;3)-[alpha-D-Man-(1-&gt;3)-[alpha-D-Man-(1-&gt;6)]-alpha-D-Man-(1-&gt;6)]-beta-D-Man-(1-&gt;4)-beta-D-GlcNAc-(1-&gt;4)-beta-D-GlcNAc)-L-asparaginyl-[protein] (N-glucan mannose isomer 5A1,2) + 3 beta-D-mannose</text>
        <dbReference type="Rhea" id="RHEA:56028"/>
        <dbReference type="Rhea" id="RHEA-COMP:14358"/>
        <dbReference type="Rhea" id="RHEA-COMP:14367"/>
        <dbReference type="ChEBI" id="CHEBI:15377"/>
        <dbReference type="ChEBI" id="CHEBI:28563"/>
        <dbReference type="ChEBI" id="CHEBI:59087"/>
        <dbReference type="ChEBI" id="CHEBI:60628"/>
        <dbReference type="EC" id="3.2.1.113"/>
    </reaction>
</comment>
<comment type="cofactor">
    <cofactor evidence="3">
        <name>Ca(2+)</name>
        <dbReference type="ChEBI" id="CHEBI:29108"/>
    </cofactor>
    <cofactor evidence="3">
        <name>Mg(2+)</name>
        <dbReference type="ChEBI" id="CHEBI:18420"/>
    </cofactor>
    <text evidence="3">Ca(2+). Can also use Mg(2+), but with lower efficiency.</text>
</comment>
<comment type="pathway">
    <text evidence="2">Protein modification; protein glycosylation.</text>
</comment>
<comment type="subunit">
    <text evidence="1">Monomer.</text>
</comment>
<comment type="subcellular location">
    <subcellularLocation>
        <location evidence="9">Secreted</location>
    </subcellularLocation>
</comment>
<comment type="similarity">
    <text evidence="9">Belongs to the glycosyl hydrolase 47 family.</text>
</comment>
<feature type="signal peptide" evidence="4">
    <location>
        <begin position="1"/>
        <end position="22"/>
    </location>
</feature>
<feature type="chain" id="PRO_0000432784" description="Mannosyl-oligosaccharide alpha-1,2-mannosidase" evidence="4">
    <location>
        <begin position="23"/>
        <end position="519"/>
    </location>
</feature>
<feature type="active site" description="Proton donor" evidence="1">
    <location>
        <position position="380"/>
    </location>
</feature>
<feature type="binding site" evidence="2">
    <location>
        <position position="507"/>
    </location>
    <ligand>
        <name>Ca(2+)</name>
        <dbReference type="ChEBI" id="CHEBI:29108"/>
    </ligand>
</feature>
<feature type="glycosylation site" description="N-linked (GlcNAc...) asparagine" evidence="5">
    <location>
        <position position="187"/>
    </location>
</feature>
<feature type="glycosylation site" description="N-linked (GlcNAc...) asparagine" evidence="5">
    <location>
        <position position="443"/>
    </location>
</feature>
<feature type="disulfide bond" evidence="1">
    <location>
        <begin position="337"/>
        <end position="366"/>
    </location>
</feature>
<gene>
    <name type="ORF">CPSG_02648</name>
</gene>
<accession>E9CXX8</accession>
<accession>A0A059NZV8</accession>
<name>MNS1B_COCPS</name>
<keyword id="KW-1015">Disulfide bond</keyword>
<keyword id="KW-0325">Glycoprotein</keyword>
<keyword id="KW-0326">Glycosidase</keyword>
<keyword id="KW-0378">Hydrolase</keyword>
<keyword id="KW-0479">Metal-binding</keyword>
<keyword id="KW-1185">Reference proteome</keyword>
<keyword id="KW-0964">Secreted</keyword>
<keyword id="KW-0732">Signal</keyword>
<sequence length="519" mass="56874">MKGSPVLAVCAAALTLIPSVVALPMIDKDLPSSISQSSDKTSQERAEAVKAAFRFAWEGYLEHAFPNDELHPVSNTPGNSRNGWGASAVDALSTAIIMDMPDVVEKILDHISNIDYSQTDTMCSLFETTIRYLGGMISAYDLLKGPGSHLVSDPAKVDVLLAQSLKLADVLKFAFDTKTGIPANELNITDKSTDGSTTNGLATTGTLVLEWTRLSDITGDPEYGRLAQKGESYLLNPQPSSSEPFPGLVGRTIDIETGLFRDDYVSWGGGSDSFYEYLIKMYVYDKGRFGKYKDRWVTAAESTIEHLKSSPSTRKDLTFVATYSGGRLGLNSGHLTCFDGGNFLLGGQILNRDDFTKFGLELVEGCYATYAATATKIGPEGFGWDATKVPEAQAEFYKEAGFYITTSYYNLRPEVIESIYYAYRMTKDPKYQEWAWDAFVAINATTRTSTGFTAIGDVNTPDGGRKYDNQESFLFAEVMKYSYLIHSPEADWQVAGPGGTNAYVFNTEAHPVKVFSRGC</sequence>
<reference key="1">
    <citation type="journal article" date="2007" name="Ann. N. Y. Acad. Sci.">
        <title>Molecular cloning and expression of a cDNA encoding a Coccidioides posadasii 1,2-alpha-mannosidase identified in the coccidioidal T27K vaccine by immunoproteomic methods.</title>
        <authorList>
            <person name="Lunetta J.M."/>
            <person name="Simmons K.A."/>
            <person name="Johnson S.M."/>
            <person name="Pappagianis D."/>
        </authorList>
    </citation>
    <scope>NUCLEOTIDE SEQUENCE [MRNA]</scope>
    <scope>FUNCTION</scope>
    <scope>CATALYTIC ACTIVITY</scope>
    <source>
        <strain>RMSCC 757 / Silveira</strain>
    </source>
</reference>
<reference key="2">
    <citation type="submission" date="2010-03" db="EMBL/GenBank/DDBJ databases">
        <title>The genome sequence of Coccidioides posadasii strain Silveira.</title>
        <authorList>
            <consortium name="The Broad Institute Genome Sequencing Center for Infectious Disease"/>
            <person name="Neafsey D."/>
            <person name="Orbach M."/>
            <person name="Henn M.R."/>
            <person name="Cole G.T."/>
            <person name="Galgiani J."/>
            <person name="Gardner M.J."/>
            <person name="Kirkland T.N."/>
            <person name="Taylor J.W."/>
            <person name="Young S.K."/>
            <person name="Zeng Q."/>
            <person name="Koehrsen M."/>
            <person name="Alvarado L."/>
            <person name="Berlin A."/>
            <person name="Borenstein D."/>
            <person name="Chapman S.B."/>
            <person name="Chen Z."/>
            <person name="Engels R."/>
            <person name="Freedman E."/>
            <person name="Gellesch M."/>
            <person name="Goldberg J."/>
            <person name="Griggs A."/>
            <person name="Gujja S."/>
            <person name="Heilman E."/>
            <person name="Heiman D."/>
            <person name="Howarth C."/>
            <person name="Jen D."/>
            <person name="Larson L."/>
            <person name="Mehta T."/>
            <person name="Neiman D."/>
            <person name="Park D."/>
            <person name="Pearson M."/>
            <person name="Richards J."/>
            <person name="Roberts A."/>
            <person name="Saif S."/>
            <person name="Shea T."/>
            <person name="Shenoy N."/>
            <person name="Sisk P."/>
            <person name="Stolte C."/>
            <person name="Sykes S."/>
            <person name="Walk T."/>
            <person name="White J."/>
            <person name="Yandava C."/>
            <person name="Haas B."/>
            <person name="Nusbaum C."/>
            <person name="Birren B."/>
        </authorList>
    </citation>
    <scope>NUCLEOTIDE SEQUENCE [LARGE SCALE GENOMIC DNA]</scope>
    <source>
        <strain>RMSCC 757 / Silveira</strain>
    </source>
</reference>
<dbReference type="EC" id="3.2.1.113" evidence="7"/>
<dbReference type="EMBL" id="DQ233502">
    <property type="protein sequence ID" value="ABB36773.3"/>
    <property type="molecule type" value="mRNA"/>
</dbReference>
<dbReference type="EMBL" id="GL636488">
    <property type="protein sequence ID" value="EFW20805.1"/>
    <property type="molecule type" value="Genomic_DNA"/>
</dbReference>
<dbReference type="SMR" id="E9CXX8"/>
<dbReference type="STRING" id="443226.E9CXX8"/>
<dbReference type="KEGG" id="cpw:9694340"/>
<dbReference type="VEuPathDB" id="FungiDB:CPSG_02648"/>
<dbReference type="VEuPathDB" id="FungiDB:D8B26_002881"/>
<dbReference type="eggNOG" id="KOG2204">
    <property type="taxonomic scope" value="Eukaryota"/>
</dbReference>
<dbReference type="HOGENOM" id="CLU_003818_0_2_1"/>
<dbReference type="OMA" id="PESFGWD"/>
<dbReference type="OrthoDB" id="26394at33183"/>
<dbReference type="UniPathway" id="UPA00378"/>
<dbReference type="Proteomes" id="UP000002497">
    <property type="component" value="Unassembled WGS sequence"/>
</dbReference>
<dbReference type="GO" id="GO:0005783">
    <property type="term" value="C:endoplasmic reticulum"/>
    <property type="evidence" value="ECO:0007669"/>
    <property type="project" value="TreeGrafter"/>
</dbReference>
<dbReference type="GO" id="GO:0005576">
    <property type="term" value="C:extracellular region"/>
    <property type="evidence" value="ECO:0007669"/>
    <property type="project" value="UniProtKB-SubCell"/>
</dbReference>
<dbReference type="GO" id="GO:0016020">
    <property type="term" value="C:membrane"/>
    <property type="evidence" value="ECO:0007669"/>
    <property type="project" value="InterPro"/>
</dbReference>
<dbReference type="GO" id="GO:0005509">
    <property type="term" value="F:calcium ion binding"/>
    <property type="evidence" value="ECO:0007669"/>
    <property type="project" value="InterPro"/>
</dbReference>
<dbReference type="GO" id="GO:0004571">
    <property type="term" value="F:mannosyl-oligosaccharide 1,2-alpha-mannosidase activity"/>
    <property type="evidence" value="ECO:0007669"/>
    <property type="project" value="UniProtKB-EC"/>
</dbReference>
<dbReference type="GO" id="GO:0005975">
    <property type="term" value="P:carbohydrate metabolic process"/>
    <property type="evidence" value="ECO:0007669"/>
    <property type="project" value="InterPro"/>
</dbReference>
<dbReference type="GO" id="GO:0036503">
    <property type="term" value="P:ERAD pathway"/>
    <property type="evidence" value="ECO:0007669"/>
    <property type="project" value="UniProtKB-ARBA"/>
</dbReference>
<dbReference type="GO" id="GO:0006486">
    <property type="term" value="P:protein glycosylation"/>
    <property type="evidence" value="ECO:0007669"/>
    <property type="project" value="UniProtKB-UniPathway"/>
</dbReference>
<dbReference type="FunFam" id="1.50.10.10:FF:000047">
    <property type="entry name" value="Mannosyl-oligosaccharide alpha-1,2-mannosidase"/>
    <property type="match status" value="1"/>
</dbReference>
<dbReference type="Gene3D" id="1.50.10.10">
    <property type="match status" value="1"/>
</dbReference>
<dbReference type="InterPro" id="IPR012341">
    <property type="entry name" value="6hp_glycosidase-like_sf"/>
</dbReference>
<dbReference type="InterPro" id="IPR001382">
    <property type="entry name" value="Glyco_hydro_47"/>
</dbReference>
<dbReference type="InterPro" id="IPR050749">
    <property type="entry name" value="Glycosyl_Hydrolase_47"/>
</dbReference>
<dbReference type="InterPro" id="IPR036026">
    <property type="entry name" value="Seven-hairpin_glycosidases"/>
</dbReference>
<dbReference type="PANTHER" id="PTHR11742:SF101">
    <property type="entry name" value="MANNOSYL-OLIGOSACCHARIDE ALPHA-1,2-MANNOSIDASE 1B"/>
    <property type="match status" value="1"/>
</dbReference>
<dbReference type="PANTHER" id="PTHR11742">
    <property type="entry name" value="MANNOSYL-OLIGOSACCHARIDE ALPHA-1,2-MANNOSIDASE-RELATED"/>
    <property type="match status" value="1"/>
</dbReference>
<dbReference type="Pfam" id="PF01532">
    <property type="entry name" value="Glyco_hydro_47"/>
    <property type="match status" value="1"/>
</dbReference>
<dbReference type="PRINTS" id="PR00747">
    <property type="entry name" value="GLYHDRLASE47"/>
</dbReference>
<dbReference type="SUPFAM" id="SSF48225">
    <property type="entry name" value="Seven-hairpin glycosidases"/>
    <property type="match status" value="1"/>
</dbReference>
<proteinExistence type="evidence at protein level"/>
<protein>
    <recommendedName>
        <fullName evidence="9">Mannosyl-oligosaccharide alpha-1,2-mannosidase</fullName>
        <ecNumber evidence="7">3.2.1.113</ecNumber>
    </recommendedName>
    <alternativeName>
        <fullName evidence="8">Class I alpha-mannosidase</fullName>
    </alternativeName>
    <alternativeName>
        <fullName evidence="9">Man(9)-alpha-mannosidase</fullName>
    </alternativeName>
</protein>
<evidence type="ECO:0000250" key="1">
    <source>
        <dbReference type="UniProtKB" id="P31723"/>
    </source>
</evidence>
<evidence type="ECO:0000250" key="2">
    <source>
        <dbReference type="UniProtKB" id="P32906"/>
    </source>
</evidence>
<evidence type="ECO:0000250" key="3">
    <source>
        <dbReference type="UniProtKB" id="Q2ULB2"/>
    </source>
</evidence>
<evidence type="ECO:0000255" key="4"/>
<evidence type="ECO:0000255" key="5">
    <source>
        <dbReference type="PROSITE-ProRule" id="PRU00498"/>
    </source>
</evidence>
<evidence type="ECO:0000269" key="6">
    <source>
    </source>
</evidence>
<evidence type="ECO:0000269" key="7">
    <source ref="2"/>
</evidence>
<evidence type="ECO:0000303" key="8">
    <source ref="2"/>
</evidence>
<evidence type="ECO:0000305" key="9"/>